<keyword id="KW-1185">Reference proteome</keyword>
<comment type="similarity">
    <text evidence="1">Belongs to the RemA family.</text>
</comment>
<dbReference type="EMBL" id="CP000771">
    <property type="protein sequence ID" value="ABS61513.1"/>
    <property type="molecule type" value="Genomic_DNA"/>
</dbReference>
<dbReference type="RefSeq" id="WP_011994804.1">
    <property type="nucleotide sequence ID" value="NC_009718.1"/>
</dbReference>
<dbReference type="SMR" id="A7HNN0"/>
<dbReference type="STRING" id="381764.Fnod_1678"/>
<dbReference type="KEGG" id="fno:Fnod_1678"/>
<dbReference type="eggNOG" id="COG2052">
    <property type="taxonomic scope" value="Bacteria"/>
</dbReference>
<dbReference type="HOGENOM" id="CLU_165326_0_0_0"/>
<dbReference type="OrthoDB" id="5432174at2"/>
<dbReference type="Proteomes" id="UP000002415">
    <property type="component" value="Chromosome"/>
</dbReference>
<dbReference type="HAMAP" id="MF_01503">
    <property type="entry name" value="RemA"/>
    <property type="match status" value="1"/>
</dbReference>
<dbReference type="InterPro" id="IPR007169">
    <property type="entry name" value="RemA-like"/>
</dbReference>
<dbReference type="NCBIfam" id="NF003315">
    <property type="entry name" value="PRK04323.1"/>
    <property type="match status" value="1"/>
</dbReference>
<dbReference type="PANTHER" id="PTHR38449:SF1">
    <property type="entry name" value="REGULATORY PROTEIN SSL2874-RELATED"/>
    <property type="match status" value="1"/>
</dbReference>
<dbReference type="PANTHER" id="PTHR38449">
    <property type="entry name" value="REGULATORY PROTEIN TM_1690-RELATED"/>
    <property type="match status" value="1"/>
</dbReference>
<dbReference type="Pfam" id="PF04025">
    <property type="entry name" value="RemA-like"/>
    <property type="match status" value="1"/>
</dbReference>
<evidence type="ECO:0000255" key="1">
    <source>
        <dbReference type="HAMAP-Rule" id="MF_01503"/>
    </source>
</evidence>
<reference key="1">
    <citation type="submission" date="2007-07" db="EMBL/GenBank/DDBJ databases">
        <title>Complete sequence of Fervidobacterium nodosum Rt17-B1.</title>
        <authorList>
            <consortium name="US DOE Joint Genome Institute"/>
            <person name="Copeland A."/>
            <person name="Lucas S."/>
            <person name="Lapidus A."/>
            <person name="Barry K."/>
            <person name="Glavina del Rio T."/>
            <person name="Dalin E."/>
            <person name="Tice H."/>
            <person name="Pitluck S."/>
            <person name="Saunders E."/>
            <person name="Brettin T."/>
            <person name="Bruce D."/>
            <person name="Detter J.C."/>
            <person name="Han C."/>
            <person name="Schmutz J."/>
            <person name="Larimer F."/>
            <person name="Land M."/>
            <person name="Hauser L."/>
            <person name="Kyrpides N."/>
            <person name="Mikhailova N."/>
            <person name="Nelson K."/>
            <person name="Gogarten J.P."/>
            <person name="Noll K."/>
            <person name="Richardson P."/>
        </authorList>
    </citation>
    <scope>NUCLEOTIDE SEQUENCE [LARGE SCALE GENOMIC DNA]</scope>
    <source>
        <strain>ATCC 35602 / DSM 5306 / Rt17-B1</strain>
    </source>
</reference>
<name>Y1678_FERNB</name>
<sequence>MFGLINIGFGNVIAGDRVIAIVNPESAPLKRLKEDAKEEGKLIDATYGRKTRSILITDSNHIILSAIQPETIAQRFIESMVEIEKQLEKIRKG</sequence>
<feature type="chain" id="PRO_1000073529" description="Putative regulatory protein Fnod_1678">
    <location>
        <begin position="1"/>
        <end position="93"/>
    </location>
</feature>
<protein>
    <recommendedName>
        <fullName evidence="1">Putative regulatory protein Fnod_1678</fullName>
    </recommendedName>
</protein>
<gene>
    <name type="ordered locus">Fnod_1678</name>
</gene>
<accession>A7HNN0</accession>
<organism>
    <name type="scientific">Fervidobacterium nodosum (strain ATCC 35602 / DSM 5306 / Rt17-B1)</name>
    <dbReference type="NCBI Taxonomy" id="381764"/>
    <lineage>
        <taxon>Bacteria</taxon>
        <taxon>Thermotogati</taxon>
        <taxon>Thermotogota</taxon>
        <taxon>Thermotogae</taxon>
        <taxon>Thermotogales</taxon>
        <taxon>Fervidobacteriaceae</taxon>
        <taxon>Fervidobacterium</taxon>
    </lineage>
</organism>
<proteinExistence type="inferred from homology"/>